<evidence type="ECO:0000255" key="1">
    <source>
        <dbReference type="HAMAP-Rule" id="MF_00222"/>
    </source>
</evidence>
<keyword id="KW-0028">Amino-acid biosynthesis</keyword>
<keyword id="KW-0057">Aromatic amino acid biosynthesis</keyword>
<keyword id="KW-0521">NADP</keyword>
<keyword id="KW-0560">Oxidoreductase</keyword>
<organism>
    <name type="scientific">Streptococcus pyogenes serotype M4 (strain MGAS10750)</name>
    <dbReference type="NCBI Taxonomy" id="370554"/>
    <lineage>
        <taxon>Bacteria</taxon>
        <taxon>Bacillati</taxon>
        <taxon>Bacillota</taxon>
        <taxon>Bacilli</taxon>
        <taxon>Lactobacillales</taxon>
        <taxon>Streptococcaceae</taxon>
        <taxon>Streptococcus</taxon>
    </lineage>
</organism>
<proteinExistence type="inferred from homology"/>
<dbReference type="EC" id="1.1.1.25" evidence="1"/>
<dbReference type="EMBL" id="CP000262">
    <property type="protein sequence ID" value="ABF38362.1"/>
    <property type="molecule type" value="Genomic_DNA"/>
</dbReference>
<dbReference type="SMR" id="Q1J5M4"/>
<dbReference type="KEGG" id="spi:MGAS10750_Spy1412"/>
<dbReference type="HOGENOM" id="CLU_044063_4_4_9"/>
<dbReference type="UniPathway" id="UPA00053">
    <property type="reaction ID" value="UER00087"/>
</dbReference>
<dbReference type="Proteomes" id="UP000002434">
    <property type="component" value="Chromosome"/>
</dbReference>
<dbReference type="GO" id="GO:0050661">
    <property type="term" value="F:NADP binding"/>
    <property type="evidence" value="ECO:0007669"/>
    <property type="project" value="InterPro"/>
</dbReference>
<dbReference type="GO" id="GO:0004764">
    <property type="term" value="F:shikimate 3-dehydrogenase (NADP+) activity"/>
    <property type="evidence" value="ECO:0007669"/>
    <property type="project" value="UniProtKB-UniRule"/>
</dbReference>
<dbReference type="GO" id="GO:0008652">
    <property type="term" value="P:amino acid biosynthetic process"/>
    <property type="evidence" value="ECO:0007669"/>
    <property type="project" value="UniProtKB-KW"/>
</dbReference>
<dbReference type="GO" id="GO:0009073">
    <property type="term" value="P:aromatic amino acid family biosynthetic process"/>
    <property type="evidence" value="ECO:0007669"/>
    <property type="project" value="UniProtKB-KW"/>
</dbReference>
<dbReference type="GO" id="GO:0009423">
    <property type="term" value="P:chorismate biosynthetic process"/>
    <property type="evidence" value="ECO:0007669"/>
    <property type="project" value="UniProtKB-UniRule"/>
</dbReference>
<dbReference type="GO" id="GO:0019632">
    <property type="term" value="P:shikimate metabolic process"/>
    <property type="evidence" value="ECO:0007669"/>
    <property type="project" value="InterPro"/>
</dbReference>
<dbReference type="CDD" id="cd01065">
    <property type="entry name" value="NAD_bind_Shikimate_DH"/>
    <property type="match status" value="1"/>
</dbReference>
<dbReference type="FunFam" id="3.40.50.10860:FF:000004">
    <property type="entry name" value="Quinate/shikimate dehydrogenase"/>
    <property type="match status" value="1"/>
</dbReference>
<dbReference type="FunFam" id="3.40.50.720:FF:000086">
    <property type="entry name" value="Quinate/shikimate dehydrogenase"/>
    <property type="match status" value="1"/>
</dbReference>
<dbReference type="Gene3D" id="3.40.50.10860">
    <property type="entry name" value="Leucine Dehydrogenase, chain A, domain 1"/>
    <property type="match status" value="1"/>
</dbReference>
<dbReference type="Gene3D" id="3.40.50.720">
    <property type="entry name" value="NAD(P)-binding Rossmann-like Domain"/>
    <property type="match status" value="1"/>
</dbReference>
<dbReference type="HAMAP" id="MF_00222">
    <property type="entry name" value="Shikimate_DH_AroE"/>
    <property type="match status" value="1"/>
</dbReference>
<dbReference type="InterPro" id="IPR046346">
    <property type="entry name" value="Aminoacid_DH-like_N_sf"/>
</dbReference>
<dbReference type="InterPro" id="IPR036291">
    <property type="entry name" value="NAD(P)-bd_dom_sf"/>
</dbReference>
<dbReference type="InterPro" id="IPR041121">
    <property type="entry name" value="SDH_C"/>
</dbReference>
<dbReference type="InterPro" id="IPR011342">
    <property type="entry name" value="Shikimate_DH"/>
</dbReference>
<dbReference type="InterPro" id="IPR013708">
    <property type="entry name" value="Shikimate_DH-bd_N"/>
</dbReference>
<dbReference type="InterPro" id="IPR022893">
    <property type="entry name" value="Shikimate_DH_fam"/>
</dbReference>
<dbReference type="NCBIfam" id="TIGR00507">
    <property type="entry name" value="aroE"/>
    <property type="match status" value="1"/>
</dbReference>
<dbReference type="NCBIfam" id="NF001319">
    <property type="entry name" value="PRK00258.3-3"/>
    <property type="match status" value="1"/>
</dbReference>
<dbReference type="PANTHER" id="PTHR21089:SF1">
    <property type="entry name" value="BIFUNCTIONAL 3-DEHYDROQUINATE DEHYDRATASE_SHIKIMATE DEHYDROGENASE, CHLOROPLASTIC"/>
    <property type="match status" value="1"/>
</dbReference>
<dbReference type="PANTHER" id="PTHR21089">
    <property type="entry name" value="SHIKIMATE DEHYDROGENASE"/>
    <property type="match status" value="1"/>
</dbReference>
<dbReference type="Pfam" id="PF18317">
    <property type="entry name" value="SDH_C"/>
    <property type="match status" value="1"/>
</dbReference>
<dbReference type="Pfam" id="PF08501">
    <property type="entry name" value="Shikimate_dh_N"/>
    <property type="match status" value="1"/>
</dbReference>
<dbReference type="SUPFAM" id="SSF53223">
    <property type="entry name" value="Aminoacid dehydrogenase-like, N-terminal domain"/>
    <property type="match status" value="1"/>
</dbReference>
<dbReference type="SUPFAM" id="SSF51735">
    <property type="entry name" value="NAD(P)-binding Rossmann-fold domains"/>
    <property type="match status" value="1"/>
</dbReference>
<reference key="1">
    <citation type="journal article" date="2006" name="Proc. Natl. Acad. Sci. U.S.A.">
        <title>Molecular genetic anatomy of inter- and intraserotype variation in the human bacterial pathogen group A Streptococcus.</title>
        <authorList>
            <person name="Beres S.B."/>
            <person name="Richter E.W."/>
            <person name="Nagiec M.J."/>
            <person name="Sumby P."/>
            <person name="Porcella S.F."/>
            <person name="DeLeo F.R."/>
            <person name="Musser J.M."/>
        </authorList>
    </citation>
    <scope>NUCLEOTIDE SEQUENCE [LARGE SCALE GENOMIC DNA]</scope>
    <source>
        <strain>MGAS10750</strain>
    </source>
</reference>
<name>AROE_STRPF</name>
<comment type="function">
    <text evidence="1">Involved in the biosynthesis of the chorismate, which leads to the biosynthesis of aromatic amino acids. Catalyzes the reversible NADPH linked reduction of 3-dehydroshikimate (DHSA) to yield shikimate (SA).</text>
</comment>
<comment type="catalytic activity">
    <reaction evidence="1">
        <text>shikimate + NADP(+) = 3-dehydroshikimate + NADPH + H(+)</text>
        <dbReference type="Rhea" id="RHEA:17737"/>
        <dbReference type="ChEBI" id="CHEBI:15378"/>
        <dbReference type="ChEBI" id="CHEBI:16630"/>
        <dbReference type="ChEBI" id="CHEBI:36208"/>
        <dbReference type="ChEBI" id="CHEBI:57783"/>
        <dbReference type="ChEBI" id="CHEBI:58349"/>
        <dbReference type="EC" id="1.1.1.25"/>
    </reaction>
</comment>
<comment type="pathway">
    <text evidence="1">Metabolic intermediate biosynthesis; chorismate biosynthesis; chorismate from D-erythrose 4-phosphate and phosphoenolpyruvate: step 4/7.</text>
</comment>
<comment type="subunit">
    <text evidence="1">Homodimer.</text>
</comment>
<comment type="similarity">
    <text evidence="1">Belongs to the shikimate dehydrogenase family.</text>
</comment>
<sequence>MSERLSGHTLLVSLLATPIRHSLSPKMHNEAYAKLGLDYAYLAFEVGTEQLADAVQGIRALGIRGSNVSMPNKEAILPLLDDLSPAAELVGAVNTVVNKDGKGHLVGHITDGIGALRALADEGVSVKNKIITLAGVGGAGKAIAVQLAFDGAKEVRLFNRQATRLSSVQKLVTKLNQLTRTKVTLQDLEDQTAFKEAIRESHLFIDATSVGMKPLENLSLITDPELIRPDLVVFDIVYSPAETKLLAFARQHGAQKVINGLGMVLYQGAEAFKLITGQDMPVDAIKPLLGDE</sequence>
<gene>
    <name evidence="1" type="primary">aroE</name>
    <name type="ordered locus">MGAS10750_Spy1412</name>
</gene>
<accession>Q1J5M4</accession>
<feature type="chain" id="PRO_1000021349" description="Shikimate dehydrogenase (NADP(+))">
    <location>
        <begin position="1"/>
        <end position="292"/>
    </location>
</feature>
<feature type="active site" description="Proton acceptor" evidence="1">
    <location>
        <position position="73"/>
    </location>
</feature>
<feature type="binding site" evidence="1">
    <location>
        <begin position="22"/>
        <end position="24"/>
    </location>
    <ligand>
        <name>shikimate</name>
        <dbReference type="ChEBI" id="CHEBI:36208"/>
    </ligand>
</feature>
<feature type="binding site" evidence="1">
    <location>
        <position position="69"/>
    </location>
    <ligand>
        <name>shikimate</name>
        <dbReference type="ChEBI" id="CHEBI:36208"/>
    </ligand>
</feature>
<feature type="binding site" evidence="1">
    <location>
        <position position="94"/>
    </location>
    <ligand>
        <name>shikimate</name>
        <dbReference type="ChEBI" id="CHEBI:36208"/>
    </ligand>
</feature>
<feature type="binding site" evidence="1">
    <location>
        <position position="111"/>
    </location>
    <ligand>
        <name>shikimate</name>
        <dbReference type="ChEBI" id="CHEBI:36208"/>
    </ligand>
</feature>
<feature type="binding site" evidence="1">
    <location>
        <begin position="135"/>
        <end position="139"/>
    </location>
    <ligand>
        <name>NADP(+)</name>
        <dbReference type="ChEBI" id="CHEBI:58349"/>
    </ligand>
</feature>
<feature type="binding site" evidence="1">
    <location>
        <position position="236"/>
    </location>
    <ligand>
        <name>NADP(+)</name>
        <dbReference type="ChEBI" id="CHEBI:58349"/>
    </ligand>
</feature>
<feature type="binding site" evidence="1">
    <location>
        <position position="238"/>
    </location>
    <ligand>
        <name>shikimate</name>
        <dbReference type="ChEBI" id="CHEBI:36208"/>
    </ligand>
</feature>
<feature type="binding site" evidence="1">
    <location>
        <position position="260"/>
    </location>
    <ligand>
        <name>NADP(+)</name>
        <dbReference type="ChEBI" id="CHEBI:58349"/>
    </ligand>
</feature>
<protein>
    <recommendedName>
        <fullName evidence="1">Shikimate dehydrogenase (NADP(+))</fullName>
        <shortName evidence="1">SDH</shortName>
        <ecNumber evidence="1">1.1.1.25</ecNumber>
    </recommendedName>
</protein>